<name>GCST_BACC3</name>
<reference key="1">
    <citation type="submission" date="2009-02" db="EMBL/GenBank/DDBJ databases">
        <title>Genome sequence of Bacillus cereus 03BB102.</title>
        <authorList>
            <person name="Dodson R.J."/>
            <person name="Jackson P."/>
            <person name="Munk A.C."/>
            <person name="Brettin T."/>
            <person name="Bruce D."/>
            <person name="Detter C."/>
            <person name="Tapia R."/>
            <person name="Han C."/>
            <person name="Sutton G."/>
            <person name="Sims D."/>
        </authorList>
    </citation>
    <scope>NUCLEOTIDE SEQUENCE [LARGE SCALE GENOMIC DNA]</scope>
    <source>
        <strain>03BB102</strain>
    </source>
</reference>
<evidence type="ECO:0000255" key="1">
    <source>
        <dbReference type="HAMAP-Rule" id="MF_00259"/>
    </source>
</evidence>
<comment type="function">
    <text evidence="1">The glycine cleavage system catalyzes the degradation of glycine.</text>
</comment>
<comment type="catalytic activity">
    <reaction evidence="1">
        <text>N(6)-[(R)-S(8)-aminomethyldihydrolipoyl]-L-lysyl-[protein] + (6S)-5,6,7,8-tetrahydrofolate = N(6)-[(R)-dihydrolipoyl]-L-lysyl-[protein] + (6R)-5,10-methylene-5,6,7,8-tetrahydrofolate + NH4(+)</text>
        <dbReference type="Rhea" id="RHEA:16945"/>
        <dbReference type="Rhea" id="RHEA-COMP:10475"/>
        <dbReference type="Rhea" id="RHEA-COMP:10492"/>
        <dbReference type="ChEBI" id="CHEBI:15636"/>
        <dbReference type="ChEBI" id="CHEBI:28938"/>
        <dbReference type="ChEBI" id="CHEBI:57453"/>
        <dbReference type="ChEBI" id="CHEBI:83100"/>
        <dbReference type="ChEBI" id="CHEBI:83143"/>
        <dbReference type="EC" id="2.1.2.10"/>
    </reaction>
</comment>
<comment type="subunit">
    <text evidence="1">The glycine cleavage system is composed of four proteins: P, T, L and H.</text>
</comment>
<comment type="similarity">
    <text evidence="1">Belongs to the GcvT family.</text>
</comment>
<feature type="chain" id="PRO_1000125631" description="Aminomethyltransferase">
    <location>
        <begin position="1"/>
        <end position="366"/>
    </location>
</feature>
<dbReference type="EC" id="2.1.2.10" evidence="1"/>
<dbReference type="EMBL" id="CP001407">
    <property type="protein sequence ID" value="ACO31100.1"/>
    <property type="molecule type" value="Genomic_DNA"/>
</dbReference>
<dbReference type="RefSeq" id="WP_000631765.1">
    <property type="nucleotide sequence ID" value="NZ_CP009318.1"/>
</dbReference>
<dbReference type="SMR" id="C1ERV0"/>
<dbReference type="KEGG" id="bcx:BCA_4336"/>
<dbReference type="PATRIC" id="fig|572264.18.peg.4288"/>
<dbReference type="Proteomes" id="UP000002210">
    <property type="component" value="Chromosome"/>
</dbReference>
<dbReference type="GO" id="GO:0005829">
    <property type="term" value="C:cytosol"/>
    <property type="evidence" value="ECO:0007669"/>
    <property type="project" value="TreeGrafter"/>
</dbReference>
<dbReference type="GO" id="GO:0005960">
    <property type="term" value="C:glycine cleavage complex"/>
    <property type="evidence" value="ECO:0007669"/>
    <property type="project" value="InterPro"/>
</dbReference>
<dbReference type="GO" id="GO:0004047">
    <property type="term" value="F:aminomethyltransferase activity"/>
    <property type="evidence" value="ECO:0007669"/>
    <property type="project" value="UniProtKB-UniRule"/>
</dbReference>
<dbReference type="GO" id="GO:0008483">
    <property type="term" value="F:transaminase activity"/>
    <property type="evidence" value="ECO:0007669"/>
    <property type="project" value="UniProtKB-KW"/>
</dbReference>
<dbReference type="GO" id="GO:0019464">
    <property type="term" value="P:glycine decarboxylation via glycine cleavage system"/>
    <property type="evidence" value="ECO:0007669"/>
    <property type="project" value="UniProtKB-UniRule"/>
</dbReference>
<dbReference type="FunFam" id="2.40.30.110:FF:000003">
    <property type="entry name" value="Aminomethyltransferase"/>
    <property type="match status" value="1"/>
</dbReference>
<dbReference type="FunFam" id="3.30.70.1400:FF:000001">
    <property type="entry name" value="Aminomethyltransferase"/>
    <property type="match status" value="1"/>
</dbReference>
<dbReference type="FunFam" id="4.10.1250.10:FF:000001">
    <property type="entry name" value="Aminomethyltransferase"/>
    <property type="match status" value="1"/>
</dbReference>
<dbReference type="Gene3D" id="2.40.30.110">
    <property type="entry name" value="Aminomethyltransferase beta-barrel domains"/>
    <property type="match status" value="1"/>
</dbReference>
<dbReference type="Gene3D" id="3.30.70.1400">
    <property type="entry name" value="Aminomethyltransferase beta-barrel domains"/>
    <property type="match status" value="1"/>
</dbReference>
<dbReference type="Gene3D" id="4.10.1250.10">
    <property type="entry name" value="Aminomethyltransferase fragment"/>
    <property type="match status" value="1"/>
</dbReference>
<dbReference type="Gene3D" id="3.30.1360.120">
    <property type="entry name" value="Probable tRNA modification gtpase trme, domain 1"/>
    <property type="match status" value="1"/>
</dbReference>
<dbReference type="HAMAP" id="MF_00259">
    <property type="entry name" value="GcvT"/>
    <property type="match status" value="1"/>
</dbReference>
<dbReference type="InterPro" id="IPR006223">
    <property type="entry name" value="GCS_T"/>
</dbReference>
<dbReference type="InterPro" id="IPR022903">
    <property type="entry name" value="GCS_T_bac"/>
</dbReference>
<dbReference type="InterPro" id="IPR013977">
    <property type="entry name" value="GCST_C"/>
</dbReference>
<dbReference type="InterPro" id="IPR006222">
    <property type="entry name" value="GCV_T_N"/>
</dbReference>
<dbReference type="InterPro" id="IPR028896">
    <property type="entry name" value="GcvT/YgfZ/DmdA"/>
</dbReference>
<dbReference type="InterPro" id="IPR029043">
    <property type="entry name" value="GcvT/YgfZ_C"/>
</dbReference>
<dbReference type="InterPro" id="IPR027266">
    <property type="entry name" value="TrmE/GcvT_dom1"/>
</dbReference>
<dbReference type="NCBIfam" id="TIGR00528">
    <property type="entry name" value="gcvT"/>
    <property type="match status" value="1"/>
</dbReference>
<dbReference type="NCBIfam" id="NF001567">
    <property type="entry name" value="PRK00389.1"/>
    <property type="match status" value="1"/>
</dbReference>
<dbReference type="PANTHER" id="PTHR43757">
    <property type="entry name" value="AMINOMETHYLTRANSFERASE"/>
    <property type="match status" value="1"/>
</dbReference>
<dbReference type="PANTHER" id="PTHR43757:SF2">
    <property type="entry name" value="AMINOMETHYLTRANSFERASE, MITOCHONDRIAL"/>
    <property type="match status" value="1"/>
</dbReference>
<dbReference type="Pfam" id="PF01571">
    <property type="entry name" value="GCV_T"/>
    <property type="match status" value="1"/>
</dbReference>
<dbReference type="Pfam" id="PF08669">
    <property type="entry name" value="GCV_T_C"/>
    <property type="match status" value="1"/>
</dbReference>
<dbReference type="PIRSF" id="PIRSF006487">
    <property type="entry name" value="GcvT"/>
    <property type="match status" value="1"/>
</dbReference>
<dbReference type="SUPFAM" id="SSF101790">
    <property type="entry name" value="Aminomethyltransferase beta-barrel domain"/>
    <property type="match status" value="1"/>
</dbReference>
<dbReference type="SUPFAM" id="SSF103025">
    <property type="entry name" value="Folate-binding domain"/>
    <property type="match status" value="1"/>
</dbReference>
<protein>
    <recommendedName>
        <fullName evidence="1">Aminomethyltransferase</fullName>
        <ecNumber evidence="1">2.1.2.10</ecNumber>
    </recommendedName>
    <alternativeName>
        <fullName evidence="1">Glycine cleavage system T protein</fullName>
    </alternativeName>
</protein>
<keyword id="KW-0032">Aminotransferase</keyword>
<keyword id="KW-0808">Transferase</keyword>
<accession>C1ERV0</accession>
<proteinExistence type="inferred from homology"/>
<gene>
    <name evidence="1" type="primary">gcvT</name>
    <name type="ordered locus">BCA_4336</name>
</gene>
<sequence length="366" mass="40221">MITLQRTPLFDVYAKYGGKTIDFGGWELPVQFSSIKEEHEAVRTAAGLFDVSHMGEVEVKGVDSLAFLQRVVTNDVSTLKVGGAQYTAMCYENGGTVDDLLIYKRGEEDYLLVINASNIEKDYEWLASHVIGDATVVNVSSEVAQLAIQGPKAEGILQKVVSEDLKEIKFFKFKNDILVDGIPALVSRTGYTGEDGFEIYCKSEDAAKLWEKLLEVGAEEGLKACGLGARDTLRFEATLPLYGQELSKDITPIEAGIGFAVKPNKEADFFGKATLKEQKENGAPRKLVGIEVIERGIPRTHYPVFIGEEKIGEVTSGTQSPTLKKSIGLALIDVKYAAVDTEVEIEIRNKRVKAVVVPTPFYKRSK</sequence>
<organism>
    <name type="scientific">Bacillus cereus (strain 03BB102)</name>
    <dbReference type="NCBI Taxonomy" id="572264"/>
    <lineage>
        <taxon>Bacteria</taxon>
        <taxon>Bacillati</taxon>
        <taxon>Bacillota</taxon>
        <taxon>Bacilli</taxon>
        <taxon>Bacillales</taxon>
        <taxon>Bacillaceae</taxon>
        <taxon>Bacillus</taxon>
        <taxon>Bacillus cereus group</taxon>
    </lineage>
</organism>